<accession>Q63Q20</accession>
<keyword id="KW-1185">Reference proteome</keyword>
<keyword id="KW-0687">Ribonucleoprotein</keyword>
<keyword id="KW-0689">Ribosomal protein</keyword>
<keyword id="KW-0694">RNA-binding</keyword>
<keyword id="KW-0699">rRNA-binding</keyword>
<evidence type="ECO:0000255" key="1">
    <source>
        <dbReference type="HAMAP-Rule" id="MF_01345"/>
    </source>
</evidence>
<evidence type="ECO:0000305" key="2"/>
<dbReference type="EMBL" id="BX571965">
    <property type="protein sequence ID" value="CAH37215.1"/>
    <property type="molecule type" value="Genomic_DNA"/>
</dbReference>
<dbReference type="RefSeq" id="WP_004201274.1">
    <property type="nucleotide sequence ID" value="NZ_CP009538.1"/>
</dbReference>
<dbReference type="RefSeq" id="YP_109798.1">
    <property type="nucleotide sequence ID" value="NC_006350.1"/>
</dbReference>
<dbReference type="SMR" id="Q63Q20"/>
<dbReference type="STRING" id="272560.BPSL3204"/>
<dbReference type="GeneID" id="93061823"/>
<dbReference type="KEGG" id="bps:BPSL3204"/>
<dbReference type="PATRIC" id="fig|272560.51.peg.2034"/>
<dbReference type="eggNOG" id="COG0186">
    <property type="taxonomic scope" value="Bacteria"/>
</dbReference>
<dbReference type="Proteomes" id="UP000000605">
    <property type="component" value="Chromosome 1"/>
</dbReference>
<dbReference type="GO" id="GO:0022627">
    <property type="term" value="C:cytosolic small ribosomal subunit"/>
    <property type="evidence" value="ECO:0007669"/>
    <property type="project" value="TreeGrafter"/>
</dbReference>
<dbReference type="GO" id="GO:0019843">
    <property type="term" value="F:rRNA binding"/>
    <property type="evidence" value="ECO:0007669"/>
    <property type="project" value="UniProtKB-UniRule"/>
</dbReference>
<dbReference type="GO" id="GO:0003735">
    <property type="term" value="F:structural constituent of ribosome"/>
    <property type="evidence" value="ECO:0007669"/>
    <property type="project" value="InterPro"/>
</dbReference>
<dbReference type="GO" id="GO:0006412">
    <property type="term" value="P:translation"/>
    <property type="evidence" value="ECO:0007669"/>
    <property type="project" value="UniProtKB-UniRule"/>
</dbReference>
<dbReference type="CDD" id="cd00364">
    <property type="entry name" value="Ribosomal_uS17"/>
    <property type="match status" value="1"/>
</dbReference>
<dbReference type="Gene3D" id="2.40.50.140">
    <property type="entry name" value="Nucleic acid-binding proteins"/>
    <property type="match status" value="1"/>
</dbReference>
<dbReference type="HAMAP" id="MF_01345_B">
    <property type="entry name" value="Ribosomal_uS17_B"/>
    <property type="match status" value="1"/>
</dbReference>
<dbReference type="InterPro" id="IPR012340">
    <property type="entry name" value="NA-bd_OB-fold"/>
</dbReference>
<dbReference type="InterPro" id="IPR000266">
    <property type="entry name" value="Ribosomal_uS17"/>
</dbReference>
<dbReference type="InterPro" id="IPR019984">
    <property type="entry name" value="Ribosomal_uS17_bact/chlr"/>
</dbReference>
<dbReference type="InterPro" id="IPR019979">
    <property type="entry name" value="Ribosomal_uS17_CS"/>
</dbReference>
<dbReference type="NCBIfam" id="NF004123">
    <property type="entry name" value="PRK05610.1"/>
    <property type="match status" value="1"/>
</dbReference>
<dbReference type="NCBIfam" id="TIGR03635">
    <property type="entry name" value="uS17_bact"/>
    <property type="match status" value="1"/>
</dbReference>
<dbReference type="PANTHER" id="PTHR10744">
    <property type="entry name" value="40S RIBOSOMAL PROTEIN S11 FAMILY MEMBER"/>
    <property type="match status" value="1"/>
</dbReference>
<dbReference type="PANTHER" id="PTHR10744:SF1">
    <property type="entry name" value="SMALL RIBOSOMAL SUBUNIT PROTEIN US17M"/>
    <property type="match status" value="1"/>
</dbReference>
<dbReference type="Pfam" id="PF00366">
    <property type="entry name" value="Ribosomal_S17"/>
    <property type="match status" value="1"/>
</dbReference>
<dbReference type="PRINTS" id="PR00973">
    <property type="entry name" value="RIBOSOMALS17"/>
</dbReference>
<dbReference type="SUPFAM" id="SSF50249">
    <property type="entry name" value="Nucleic acid-binding proteins"/>
    <property type="match status" value="1"/>
</dbReference>
<dbReference type="PROSITE" id="PS00056">
    <property type="entry name" value="RIBOSOMAL_S17"/>
    <property type="match status" value="1"/>
</dbReference>
<protein>
    <recommendedName>
        <fullName evidence="1">Small ribosomal subunit protein uS17</fullName>
    </recommendedName>
    <alternativeName>
        <fullName evidence="2">30S ribosomal protein S17</fullName>
    </alternativeName>
</protein>
<name>RS17_BURPS</name>
<comment type="function">
    <text evidence="1">One of the primary rRNA binding proteins, it binds specifically to the 5'-end of 16S ribosomal RNA.</text>
</comment>
<comment type="subunit">
    <text evidence="1">Part of the 30S ribosomal subunit.</text>
</comment>
<comment type="similarity">
    <text evidence="1">Belongs to the universal ribosomal protein uS17 family.</text>
</comment>
<gene>
    <name evidence="1" type="primary">rpsQ</name>
    <name type="ordered locus">BPSL3204</name>
</gene>
<feature type="chain" id="PRO_0000233446" description="Small ribosomal subunit protein uS17">
    <location>
        <begin position="1"/>
        <end position="90"/>
    </location>
</feature>
<sequence length="90" mass="10249">MNDSVKTSLKRTLVGKVVSNKMDKTVTVLVEHRVKHPIYGKYVVRSKKYHAHDEANTYNEGDLVEIQETRPVSKTKAWAVSRLVEAARVI</sequence>
<proteinExistence type="inferred from homology"/>
<reference key="1">
    <citation type="journal article" date="2004" name="Proc. Natl. Acad. Sci. U.S.A.">
        <title>Genomic plasticity of the causative agent of melioidosis, Burkholderia pseudomallei.</title>
        <authorList>
            <person name="Holden M.T.G."/>
            <person name="Titball R.W."/>
            <person name="Peacock S.J."/>
            <person name="Cerdeno-Tarraga A.-M."/>
            <person name="Atkins T."/>
            <person name="Crossman L.C."/>
            <person name="Pitt T."/>
            <person name="Churcher C."/>
            <person name="Mungall K.L."/>
            <person name="Bentley S.D."/>
            <person name="Sebaihia M."/>
            <person name="Thomson N.R."/>
            <person name="Bason N."/>
            <person name="Beacham I.R."/>
            <person name="Brooks K."/>
            <person name="Brown K.A."/>
            <person name="Brown N.F."/>
            <person name="Challis G.L."/>
            <person name="Cherevach I."/>
            <person name="Chillingworth T."/>
            <person name="Cronin A."/>
            <person name="Crossett B."/>
            <person name="Davis P."/>
            <person name="DeShazer D."/>
            <person name="Feltwell T."/>
            <person name="Fraser A."/>
            <person name="Hance Z."/>
            <person name="Hauser H."/>
            <person name="Holroyd S."/>
            <person name="Jagels K."/>
            <person name="Keith K.E."/>
            <person name="Maddison M."/>
            <person name="Moule S."/>
            <person name="Price C."/>
            <person name="Quail M.A."/>
            <person name="Rabbinowitsch E."/>
            <person name="Rutherford K."/>
            <person name="Sanders M."/>
            <person name="Simmonds M."/>
            <person name="Songsivilai S."/>
            <person name="Stevens K."/>
            <person name="Tumapa S."/>
            <person name="Vesaratchavest M."/>
            <person name="Whitehead S."/>
            <person name="Yeats C."/>
            <person name="Barrell B.G."/>
            <person name="Oyston P.C.F."/>
            <person name="Parkhill J."/>
        </authorList>
    </citation>
    <scope>NUCLEOTIDE SEQUENCE [LARGE SCALE GENOMIC DNA]</scope>
    <source>
        <strain>K96243</strain>
    </source>
</reference>
<organism>
    <name type="scientific">Burkholderia pseudomallei (strain K96243)</name>
    <dbReference type="NCBI Taxonomy" id="272560"/>
    <lineage>
        <taxon>Bacteria</taxon>
        <taxon>Pseudomonadati</taxon>
        <taxon>Pseudomonadota</taxon>
        <taxon>Betaproteobacteria</taxon>
        <taxon>Burkholderiales</taxon>
        <taxon>Burkholderiaceae</taxon>
        <taxon>Burkholderia</taxon>
        <taxon>pseudomallei group</taxon>
    </lineage>
</organism>